<gene>
    <name evidence="1" type="primary">lsrF</name>
    <name type="ordered locus">YPA_3877</name>
</gene>
<protein>
    <recommendedName>
        <fullName evidence="1">3-hydroxy-5-phosphonooxypentane-2,4-dione thiolase</fullName>
        <ecNumber evidence="1">2.3.1.245</ecNumber>
    </recommendedName>
</protein>
<feature type="chain" id="PRO_0000351537" description="3-hydroxy-5-phosphonooxypentane-2,4-dione thiolase">
    <location>
        <begin position="1"/>
        <end position="291"/>
    </location>
</feature>
<feature type="active site" description="Schiff-base intermediate with substrate" evidence="1">
    <location>
        <position position="203"/>
    </location>
</feature>
<organism>
    <name type="scientific">Yersinia pestis bv. Antiqua (strain Antiqua)</name>
    <dbReference type="NCBI Taxonomy" id="360102"/>
    <lineage>
        <taxon>Bacteria</taxon>
        <taxon>Pseudomonadati</taxon>
        <taxon>Pseudomonadota</taxon>
        <taxon>Gammaproteobacteria</taxon>
        <taxon>Enterobacterales</taxon>
        <taxon>Yersiniaceae</taxon>
        <taxon>Yersinia</taxon>
    </lineage>
</organism>
<sequence length="291" mass="31611">MADLDDIKDGKDFGIGIPQQNPAFTLKGSGSLDWGMQSRLARIFNPKTNRTVMLAFDHGYFQGPTTGLERIDINIAPLFEYADVLMCTRGILRSVVPAAANRPVVLRASGANSILTYLSNEAVAVAMEDAVRLNACAVAAQVYIGTEHEHQSIKNIIQLIDQGMRYGMPTMAVTGVGKDMVRDQRYFSLASRIAAEMGAQVIKTYYVDSGFERIAAGCPVPIVIAGGKKLPERDALEMCYQAIDQGASGVDMGRNIFQSDAPIAMLKAVHAIVHKNENAAAAYQLFLHEQN</sequence>
<evidence type="ECO:0000255" key="1">
    <source>
        <dbReference type="HAMAP-Rule" id="MF_02052"/>
    </source>
</evidence>
<comment type="function">
    <text evidence="1">Involved in the degradation of phospho-AI-2, thereby terminating induction of the lsr operon and closing the AI-2 signaling cycle. Catalyzes the transfer of an acetyl moiety from 3-hydroxy-5-phosphonooxypentane-2,4-dione to CoA to form glycerone phosphate and acetyl-CoA.</text>
</comment>
<comment type="catalytic activity">
    <reaction evidence="1">
        <text>dihydroxyacetone phosphate + acetyl-CoA = 3-hydroxy-2,4-dioxopentyl phosphate + CoA</text>
        <dbReference type="Rhea" id="RHEA:44736"/>
        <dbReference type="ChEBI" id="CHEBI:57287"/>
        <dbReference type="ChEBI" id="CHEBI:57288"/>
        <dbReference type="ChEBI" id="CHEBI:57642"/>
        <dbReference type="ChEBI" id="CHEBI:84359"/>
        <dbReference type="EC" id="2.3.1.245"/>
    </reaction>
</comment>
<comment type="subunit">
    <text evidence="1">Homodecamer.</text>
</comment>
<comment type="subcellular location">
    <subcellularLocation>
        <location evidence="1">Cytoplasm</location>
    </subcellularLocation>
</comment>
<comment type="similarity">
    <text evidence="1">Belongs to the DeoC/FbaB aldolase family.</text>
</comment>
<accession>Q1C134</accession>
<keyword id="KW-0963">Cytoplasm</keyword>
<keyword id="KW-0704">Schiff base</keyword>
<keyword id="KW-0808">Transferase</keyword>
<reference key="1">
    <citation type="journal article" date="2006" name="J. Bacteriol.">
        <title>Complete genome sequence of Yersinia pestis strains Antiqua and Nepal516: evidence of gene reduction in an emerging pathogen.</title>
        <authorList>
            <person name="Chain P.S.G."/>
            <person name="Hu P."/>
            <person name="Malfatti S.A."/>
            <person name="Radnedge L."/>
            <person name="Larimer F."/>
            <person name="Vergez L.M."/>
            <person name="Worsham P."/>
            <person name="Chu M.C."/>
            <person name="Andersen G.L."/>
        </authorList>
    </citation>
    <scope>NUCLEOTIDE SEQUENCE [LARGE SCALE GENOMIC DNA]</scope>
    <source>
        <strain>Antiqua</strain>
    </source>
</reference>
<proteinExistence type="inferred from homology"/>
<dbReference type="EC" id="2.3.1.245" evidence="1"/>
<dbReference type="EMBL" id="CP000308">
    <property type="protein sequence ID" value="ABG15838.1"/>
    <property type="molecule type" value="Genomic_DNA"/>
</dbReference>
<dbReference type="RefSeq" id="WP_002209188.1">
    <property type="nucleotide sequence ID" value="NZ_CP009906.1"/>
</dbReference>
<dbReference type="SMR" id="Q1C134"/>
<dbReference type="GeneID" id="57974202"/>
<dbReference type="KEGG" id="ypa:YPA_3877"/>
<dbReference type="Proteomes" id="UP000001971">
    <property type="component" value="Chromosome"/>
</dbReference>
<dbReference type="GO" id="GO:0005737">
    <property type="term" value="C:cytoplasm"/>
    <property type="evidence" value="ECO:0007669"/>
    <property type="project" value="UniProtKB-SubCell"/>
</dbReference>
<dbReference type="GO" id="GO:0016747">
    <property type="term" value="F:acyltransferase activity, transferring groups other than amino-acyl groups"/>
    <property type="evidence" value="ECO:0007669"/>
    <property type="project" value="UniProtKB-UniRule"/>
</dbReference>
<dbReference type="GO" id="GO:0004332">
    <property type="term" value="F:fructose-bisphosphate aldolase activity"/>
    <property type="evidence" value="ECO:0007669"/>
    <property type="project" value="InterPro"/>
</dbReference>
<dbReference type="CDD" id="cd00958">
    <property type="entry name" value="DhnA"/>
    <property type="match status" value="1"/>
</dbReference>
<dbReference type="Gene3D" id="3.20.20.70">
    <property type="entry name" value="Aldolase class I"/>
    <property type="match status" value="1"/>
</dbReference>
<dbReference type="HAMAP" id="MF_02052">
    <property type="entry name" value="LsrF"/>
    <property type="match status" value="1"/>
</dbReference>
<dbReference type="InterPro" id="IPR013785">
    <property type="entry name" value="Aldolase_TIM"/>
</dbReference>
<dbReference type="InterPro" id="IPR002915">
    <property type="entry name" value="DeoC/FbaB/LacD_aldolase"/>
</dbReference>
<dbReference type="InterPro" id="IPR050456">
    <property type="entry name" value="DeoC/FbaB_aldolase"/>
</dbReference>
<dbReference type="InterPro" id="IPR041720">
    <property type="entry name" value="FbaB-like"/>
</dbReference>
<dbReference type="InterPro" id="IPR033673">
    <property type="entry name" value="LsrF"/>
</dbReference>
<dbReference type="NCBIfam" id="NF006081">
    <property type="entry name" value="PRK08227.1"/>
    <property type="match status" value="1"/>
</dbReference>
<dbReference type="PANTHER" id="PTHR47916:SF1">
    <property type="entry name" value="3-HYDROXY-5-PHOSPHONOOXYPENTANE-2,4-DIONE THIOLASE"/>
    <property type="match status" value="1"/>
</dbReference>
<dbReference type="PANTHER" id="PTHR47916">
    <property type="entry name" value="FRUCTOSE-BISPHOSPHATE ALDOLASE CLASS 1"/>
    <property type="match status" value="1"/>
</dbReference>
<dbReference type="Pfam" id="PF01791">
    <property type="entry name" value="DeoC"/>
    <property type="match status" value="1"/>
</dbReference>
<dbReference type="PIRSF" id="PIRSF038992">
    <property type="entry name" value="Aldolase_Ia"/>
    <property type="match status" value="1"/>
</dbReference>
<dbReference type="SMART" id="SM01133">
    <property type="entry name" value="DeoC"/>
    <property type="match status" value="1"/>
</dbReference>
<dbReference type="SUPFAM" id="SSF51569">
    <property type="entry name" value="Aldolase"/>
    <property type="match status" value="1"/>
</dbReference>
<name>LSRF_YERPA</name>